<name>Y512_MYCPN</name>
<evidence type="ECO:0000305" key="1"/>
<gene>
    <name type="ordered locus">MPN_512</name>
    <name type="ORF">F04_orf154</name>
    <name type="ORF">MP330</name>
</gene>
<dbReference type="EMBL" id="U00089">
    <property type="protein sequence ID" value="AAB95978.1"/>
    <property type="molecule type" value="Genomic_DNA"/>
</dbReference>
<dbReference type="PIR" id="S73656">
    <property type="entry name" value="S73656"/>
</dbReference>
<dbReference type="RefSeq" id="NP_110200.1">
    <property type="nucleotide sequence ID" value="NC_000912.1"/>
</dbReference>
<dbReference type="RefSeq" id="WP_010874868.1">
    <property type="nucleotide sequence ID" value="NZ_OU342337.1"/>
</dbReference>
<dbReference type="SMR" id="P75274"/>
<dbReference type="STRING" id="272634.MPN_512"/>
<dbReference type="EnsemblBacteria" id="AAB95978">
    <property type="protein sequence ID" value="AAB95978"/>
    <property type="gene ID" value="MPN_512"/>
</dbReference>
<dbReference type="KEGG" id="mpn:MPN_512"/>
<dbReference type="PATRIC" id="fig|272634.6.peg.564"/>
<dbReference type="HOGENOM" id="CLU_1702323_0_0_14"/>
<dbReference type="BioCyc" id="MPNE272634:G1GJ3-841-MONOMER"/>
<dbReference type="Proteomes" id="UP000000808">
    <property type="component" value="Chromosome"/>
</dbReference>
<dbReference type="InterPro" id="IPR004319">
    <property type="entry name" value="DUF240"/>
</dbReference>
<dbReference type="Pfam" id="PF03086">
    <property type="entry name" value="DUF240"/>
    <property type="match status" value="1"/>
</dbReference>
<proteinExistence type="inferred from homology"/>
<feature type="chain" id="PRO_0000215259" description="Uncharacterized protein MPN_512">
    <location>
        <begin position="1"/>
        <end position="154"/>
    </location>
</feature>
<accession>P75274</accession>
<protein>
    <recommendedName>
        <fullName>Uncharacterized protein MPN_512</fullName>
    </recommendedName>
</protein>
<keyword id="KW-1185">Reference proteome</keyword>
<organism>
    <name type="scientific">Mycoplasma pneumoniae (strain ATCC 29342 / M129 / Subtype 1)</name>
    <name type="common">Mycoplasmoides pneumoniae</name>
    <dbReference type="NCBI Taxonomy" id="272634"/>
    <lineage>
        <taxon>Bacteria</taxon>
        <taxon>Bacillati</taxon>
        <taxon>Mycoplasmatota</taxon>
        <taxon>Mycoplasmoidales</taxon>
        <taxon>Mycoplasmoidaceae</taxon>
        <taxon>Mycoplasmoides</taxon>
    </lineage>
</organism>
<reference key="1">
    <citation type="journal article" date="1996" name="Nucleic Acids Res.">
        <title>Complete sequence analysis of the genome of the bacterium Mycoplasma pneumoniae.</title>
        <authorList>
            <person name="Himmelreich R."/>
            <person name="Hilbert H."/>
            <person name="Plagens H."/>
            <person name="Pirkl E."/>
            <person name="Li B.-C."/>
            <person name="Herrmann R."/>
        </authorList>
    </citation>
    <scope>NUCLEOTIDE SEQUENCE [LARGE SCALE GENOMIC DNA]</scope>
    <source>
        <strain>ATCC 29342 / M129 / Subtype 1</strain>
    </source>
</reference>
<comment type="similarity">
    <text evidence="1">Belongs to the MG032/MG096/MG288 family.</text>
</comment>
<sequence>MRYSFVIQWDFETVYTGVNSTTNLAFSVKAMTTNFANLQELQDSLVLRGQNLTTQLFWKPTVKRLVLGNNNDLTTVAKAAVGDNLFTTQANLTKSVLDQTVLKEAESRFEATVLKPFIEARQKALAEHQAHQKVLEEQRQKQLEELKQKQKEAE</sequence>